<keyword id="KW-0030">Aminoacyl-tRNA synthetase</keyword>
<keyword id="KW-0067">ATP-binding</keyword>
<keyword id="KW-0963">Cytoplasm</keyword>
<keyword id="KW-0436">Ligase</keyword>
<keyword id="KW-0479">Metal-binding</keyword>
<keyword id="KW-0547">Nucleotide-binding</keyword>
<keyword id="KW-0648">Protein biosynthesis</keyword>
<keyword id="KW-1185">Reference proteome</keyword>
<keyword id="KW-0694">RNA-binding</keyword>
<keyword id="KW-0820">tRNA-binding</keyword>
<keyword id="KW-0862">Zinc</keyword>
<gene>
    <name evidence="1" type="primary">alaS</name>
    <name type="ordered locus">BH1267</name>
</gene>
<feature type="chain" id="PRO_0000075055" description="Alanine--tRNA ligase">
    <location>
        <begin position="1"/>
        <end position="879"/>
    </location>
</feature>
<feature type="binding site" evidence="1">
    <location>
        <position position="566"/>
    </location>
    <ligand>
        <name>Zn(2+)</name>
        <dbReference type="ChEBI" id="CHEBI:29105"/>
    </ligand>
</feature>
<feature type="binding site" evidence="1">
    <location>
        <position position="570"/>
    </location>
    <ligand>
        <name>Zn(2+)</name>
        <dbReference type="ChEBI" id="CHEBI:29105"/>
    </ligand>
</feature>
<feature type="binding site" evidence="1">
    <location>
        <position position="668"/>
    </location>
    <ligand>
        <name>Zn(2+)</name>
        <dbReference type="ChEBI" id="CHEBI:29105"/>
    </ligand>
</feature>
<feature type="binding site" evidence="1">
    <location>
        <position position="672"/>
    </location>
    <ligand>
        <name>Zn(2+)</name>
        <dbReference type="ChEBI" id="CHEBI:29105"/>
    </ligand>
</feature>
<organism>
    <name type="scientific">Halalkalibacterium halodurans (strain ATCC BAA-125 / DSM 18197 / FERM 7344 / JCM 9153 / C-125)</name>
    <name type="common">Bacillus halodurans</name>
    <dbReference type="NCBI Taxonomy" id="272558"/>
    <lineage>
        <taxon>Bacteria</taxon>
        <taxon>Bacillati</taxon>
        <taxon>Bacillota</taxon>
        <taxon>Bacilli</taxon>
        <taxon>Bacillales</taxon>
        <taxon>Bacillaceae</taxon>
        <taxon>Halalkalibacterium (ex Joshi et al. 2022)</taxon>
    </lineage>
</organism>
<accession>Q9KDE6</accession>
<protein>
    <recommendedName>
        <fullName evidence="1">Alanine--tRNA ligase</fullName>
        <ecNumber evidence="1">6.1.1.7</ecNumber>
    </recommendedName>
    <alternativeName>
        <fullName evidence="1">Alanyl-tRNA synthetase</fullName>
        <shortName evidence="1">AlaRS</shortName>
    </alternativeName>
</protein>
<comment type="function">
    <text evidence="1">Catalyzes the attachment of alanine to tRNA(Ala) in a two-step reaction: alanine is first activated by ATP to form Ala-AMP and then transferred to the acceptor end of tRNA(Ala). Also edits incorrectly charged Ser-tRNA(Ala) and Gly-tRNA(Ala) via its editing domain.</text>
</comment>
<comment type="catalytic activity">
    <reaction evidence="1">
        <text>tRNA(Ala) + L-alanine + ATP = L-alanyl-tRNA(Ala) + AMP + diphosphate</text>
        <dbReference type="Rhea" id="RHEA:12540"/>
        <dbReference type="Rhea" id="RHEA-COMP:9657"/>
        <dbReference type="Rhea" id="RHEA-COMP:9923"/>
        <dbReference type="ChEBI" id="CHEBI:30616"/>
        <dbReference type="ChEBI" id="CHEBI:33019"/>
        <dbReference type="ChEBI" id="CHEBI:57972"/>
        <dbReference type="ChEBI" id="CHEBI:78442"/>
        <dbReference type="ChEBI" id="CHEBI:78497"/>
        <dbReference type="ChEBI" id="CHEBI:456215"/>
        <dbReference type="EC" id="6.1.1.7"/>
    </reaction>
</comment>
<comment type="cofactor">
    <cofactor evidence="1">
        <name>Zn(2+)</name>
        <dbReference type="ChEBI" id="CHEBI:29105"/>
    </cofactor>
    <text evidence="1">Binds 1 zinc ion per subunit.</text>
</comment>
<comment type="subcellular location">
    <subcellularLocation>
        <location evidence="1">Cytoplasm</location>
    </subcellularLocation>
</comment>
<comment type="domain">
    <text evidence="1">Consists of three domains; the N-terminal catalytic domain, the editing domain and the C-terminal C-Ala domain. The editing domain removes incorrectly charged amino acids, while the C-Ala domain, along with tRNA(Ala), serves as a bridge to cooperatively bring together the editing and aminoacylation centers thus stimulating deacylation of misacylated tRNAs.</text>
</comment>
<comment type="similarity">
    <text evidence="1">Belongs to the class-II aminoacyl-tRNA synthetase family.</text>
</comment>
<dbReference type="EC" id="6.1.1.7" evidence="1"/>
<dbReference type="EMBL" id="BA000004">
    <property type="protein sequence ID" value="BAB04986.1"/>
    <property type="molecule type" value="Genomic_DNA"/>
</dbReference>
<dbReference type="PIR" id="C83808">
    <property type="entry name" value="C83808"/>
</dbReference>
<dbReference type="RefSeq" id="WP_010897435.1">
    <property type="nucleotide sequence ID" value="NC_002570.2"/>
</dbReference>
<dbReference type="SMR" id="Q9KDE6"/>
<dbReference type="STRING" id="272558.gene:10727161"/>
<dbReference type="KEGG" id="bha:BH1267"/>
<dbReference type="eggNOG" id="COG0013">
    <property type="taxonomic scope" value="Bacteria"/>
</dbReference>
<dbReference type="HOGENOM" id="CLU_004485_1_1_9"/>
<dbReference type="OrthoDB" id="9803884at2"/>
<dbReference type="Proteomes" id="UP000001258">
    <property type="component" value="Chromosome"/>
</dbReference>
<dbReference type="GO" id="GO:0005829">
    <property type="term" value="C:cytosol"/>
    <property type="evidence" value="ECO:0007669"/>
    <property type="project" value="TreeGrafter"/>
</dbReference>
<dbReference type="GO" id="GO:0004813">
    <property type="term" value="F:alanine-tRNA ligase activity"/>
    <property type="evidence" value="ECO:0007669"/>
    <property type="project" value="UniProtKB-UniRule"/>
</dbReference>
<dbReference type="GO" id="GO:0002161">
    <property type="term" value="F:aminoacyl-tRNA deacylase activity"/>
    <property type="evidence" value="ECO:0007669"/>
    <property type="project" value="TreeGrafter"/>
</dbReference>
<dbReference type="GO" id="GO:0005524">
    <property type="term" value="F:ATP binding"/>
    <property type="evidence" value="ECO:0007669"/>
    <property type="project" value="UniProtKB-UniRule"/>
</dbReference>
<dbReference type="GO" id="GO:0140096">
    <property type="term" value="F:catalytic activity, acting on a protein"/>
    <property type="evidence" value="ECO:0007669"/>
    <property type="project" value="UniProtKB-ARBA"/>
</dbReference>
<dbReference type="GO" id="GO:0016740">
    <property type="term" value="F:transferase activity"/>
    <property type="evidence" value="ECO:0007669"/>
    <property type="project" value="UniProtKB-ARBA"/>
</dbReference>
<dbReference type="GO" id="GO:0000049">
    <property type="term" value="F:tRNA binding"/>
    <property type="evidence" value="ECO:0007669"/>
    <property type="project" value="UniProtKB-KW"/>
</dbReference>
<dbReference type="GO" id="GO:0008270">
    <property type="term" value="F:zinc ion binding"/>
    <property type="evidence" value="ECO:0007669"/>
    <property type="project" value="UniProtKB-UniRule"/>
</dbReference>
<dbReference type="GO" id="GO:0006419">
    <property type="term" value="P:alanyl-tRNA aminoacylation"/>
    <property type="evidence" value="ECO:0007669"/>
    <property type="project" value="UniProtKB-UniRule"/>
</dbReference>
<dbReference type="CDD" id="cd00673">
    <property type="entry name" value="AlaRS_core"/>
    <property type="match status" value="1"/>
</dbReference>
<dbReference type="FunFam" id="2.40.30.130:FF:000001">
    <property type="entry name" value="Alanine--tRNA ligase"/>
    <property type="match status" value="1"/>
</dbReference>
<dbReference type="FunFam" id="3.10.310.40:FF:000001">
    <property type="entry name" value="Alanine--tRNA ligase"/>
    <property type="match status" value="1"/>
</dbReference>
<dbReference type="FunFam" id="3.30.54.20:FF:000001">
    <property type="entry name" value="Alanine--tRNA ligase"/>
    <property type="match status" value="1"/>
</dbReference>
<dbReference type="FunFam" id="3.30.930.10:FF:000046">
    <property type="entry name" value="Alanine--tRNA ligase"/>
    <property type="match status" value="1"/>
</dbReference>
<dbReference type="FunFam" id="3.30.980.10:FF:000004">
    <property type="entry name" value="Alanine--tRNA ligase, cytoplasmic"/>
    <property type="match status" value="1"/>
</dbReference>
<dbReference type="Gene3D" id="2.40.30.130">
    <property type="match status" value="1"/>
</dbReference>
<dbReference type="Gene3D" id="3.10.310.40">
    <property type="match status" value="1"/>
</dbReference>
<dbReference type="Gene3D" id="3.30.54.20">
    <property type="match status" value="1"/>
</dbReference>
<dbReference type="Gene3D" id="6.10.250.550">
    <property type="match status" value="1"/>
</dbReference>
<dbReference type="Gene3D" id="3.30.930.10">
    <property type="entry name" value="Bira Bifunctional Protein, Domain 2"/>
    <property type="match status" value="1"/>
</dbReference>
<dbReference type="Gene3D" id="3.30.980.10">
    <property type="entry name" value="Threonyl-trna Synthetase, Chain A, domain 2"/>
    <property type="match status" value="1"/>
</dbReference>
<dbReference type="HAMAP" id="MF_00036_B">
    <property type="entry name" value="Ala_tRNA_synth_B"/>
    <property type="match status" value="1"/>
</dbReference>
<dbReference type="InterPro" id="IPR045864">
    <property type="entry name" value="aa-tRNA-synth_II/BPL/LPL"/>
</dbReference>
<dbReference type="InterPro" id="IPR002318">
    <property type="entry name" value="Ala-tRNA-lgiase_IIc"/>
</dbReference>
<dbReference type="InterPro" id="IPR018162">
    <property type="entry name" value="Ala-tRNA-ligase_IIc_anticod-bd"/>
</dbReference>
<dbReference type="InterPro" id="IPR018165">
    <property type="entry name" value="Ala-tRNA-synth_IIc_core"/>
</dbReference>
<dbReference type="InterPro" id="IPR018164">
    <property type="entry name" value="Ala-tRNA-synth_IIc_N"/>
</dbReference>
<dbReference type="InterPro" id="IPR050058">
    <property type="entry name" value="Ala-tRNA_ligase"/>
</dbReference>
<dbReference type="InterPro" id="IPR023033">
    <property type="entry name" value="Ala_tRNA_ligase_euk/bac"/>
</dbReference>
<dbReference type="InterPro" id="IPR003156">
    <property type="entry name" value="DHHA1_dom"/>
</dbReference>
<dbReference type="InterPro" id="IPR018163">
    <property type="entry name" value="Thr/Ala-tRNA-synth_IIc_edit"/>
</dbReference>
<dbReference type="InterPro" id="IPR009000">
    <property type="entry name" value="Transl_B-barrel_sf"/>
</dbReference>
<dbReference type="InterPro" id="IPR012947">
    <property type="entry name" value="tRNA_SAD"/>
</dbReference>
<dbReference type="NCBIfam" id="TIGR00344">
    <property type="entry name" value="alaS"/>
    <property type="match status" value="1"/>
</dbReference>
<dbReference type="PANTHER" id="PTHR11777:SF9">
    <property type="entry name" value="ALANINE--TRNA LIGASE, CYTOPLASMIC"/>
    <property type="match status" value="1"/>
</dbReference>
<dbReference type="PANTHER" id="PTHR11777">
    <property type="entry name" value="ALANYL-TRNA SYNTHETASE"/>
    <property type="match status" value="1"/>
</dbReference>
<dbReference type="Pfam" id="PF02272">
    <property type="entry name" value="DHHA1"/>
    <property type="match status" value="1"/>
</dbReference>
<dbReference type="Pfam" id="PF01411">
    <property type="entry name" value="tRNA-synt_2c"/>
    <property type="match status" value="1"/>
</dbReference>
<dbReference type="Pfam" id="PF07973">
    <property type="entry name" value="tRNA_SAD"/>
    <property type="match status" value="1"/>
</dbReference>
<dbReference type="PRINTS" id="PR00980">
    <property type="entry name" value="TRNASYNTHALA"/>
</dbReference>
<dbReference type="SMART" id="SM00863">
    <property type="entry name" value="tRNA_SAD"/>
    <property type="match status" value="1"/>
</dbReference>
<dbReference type="SUPFAM" id="SSF55681">
    <property type="entry name" value="Class II aaRS and biotin synthetases"/>
    <property type="match status" value="1"/>
</dbReference>
<dbReference type="SUPFAM" id="SSF101353">
    <property type="entry name" value="Putative anticodon-binding domain of alanyl-tRNA synthetase (AlaRS)"/>
    <property type="match status" value="1"/>
</dbReference>
<dbReference type="SUPFAM" id="SSF55186">
    <property type="entry name" value="ThrRS/AlaRS common domain"/>
    <property type="match status" value="1"/>
</dbReference>
<dbReference type="SUPFAM" id="SSF50447">
    <property type="entry name" value="Translation proteins"/>
    <property type="match status" value="1"/>
</dbReference>
<dbReference type="PROSITE" id="PS50860">
    <property type="entry name" value="AA_TRNA_LIGASE_II_ALA"/>
    <property type="match status" value="1"/>
</dbReference>
<name>SYA_HALH5</name>
<reference key="1">
    <citation type="journal article" date="2000" name="Nucleic Acids Res.">
        <title>Complete genome sequence of the alkaliphilic bacterium Bacillus halodurans and genomic sequence comparison with Bacillus subtilis.</title>
        <authorList>
            <person name="Takami H."/>
            <person name="Nakasone K."/>
            <person name="Takaki Y."/>
            <person name="Maeno G."/>
            <person name="Sasaki R."/>
            <person name="Masui N."/>
            <person name="Fuji F."/>
            <person name="Hirama C."/>
            <person name="Nakamura Y."/>
            <person name="Ogasawara N."/>
            <person name="Kuhara S."/>
            <person name="Horikoshi K."/>
        </authorList>
    </citation>
    <scope>NUCLEOTIDE SEQUENCE [LARGE SCALE GENOMIC DNA]</scope>
    <source>
        <strain>ATCC BAA-125 / DSM 18197 / FERM 7344 / JCM 9153 / C-125</strain>
    </source>
</reference>
<proteinExistence type="inferred from homology"/>
<sequence>MKYLTSAQVRQMFLDFFKEKGHDVEPSASLVPHDDPSLLWINSGVATLKKYFDGRVIPENPRITNAQKSIRTNDIENVGKTARHHTFFEMLGNFSIGDYFKEEAIEWAWEFLTSEKWIGFDKEKLSVTVHPEDDEAYSYWKEKIGIPEERIIRLEGNFWDIGEGPSGPNTEIFYDRGPEYGDQPNDPELYPGGENDRYLEVWNLVFSQFNHNPDGSYTPLPKKNIDTGMGLERMVSVIQNVPTNFETDLFMPIIRATEKISGTEYGSHHEADVSFKVIADHIRTVTFAIGDGALPSNEGRGYVLRRLLRRAVRYAKQIGIDRPFMYELVPVVGDIMVDFYPEVKEKAAFIQKVVKTEEERFHETLNEGLSILEKVIDKAKSEGASTISGSDVFRLYDTYGFPVDLTEEYVEEQGLQVDLDGFEAEMERQRERARTARQQAGSMQVQDEVLGQITVDSTFIGYKQLSTETTIETIVLDKTVADYVGAGQEAKVILKETPFYAESGGQVADKGIIRGANGFAVVSDVQKAPNGQHLHTVIVKEGTLQVNDQVQAIVEETERSGIVKNHTATHLLHRALKDVLGEHVNQAGSLVSEERLRFDFSHFGQVTDEEKEKIERIVNEKIWQAIKVNISTKTLDEAKAIGAMALFGEKYGDIVRVVEVGDYSIELCGGCHVTNTSEIGLFKIVSESGIGAGVRRIEAVTGKEAFLFMAKQLDLLKETAATVKAKNVKDVPVRVEALQQQIRELQRENESLNAKLGNMEAGSLVNEVQKIEGVPVLAKAISGADMDGLRSIVDKLKQEIPSVVIVLGTASEGKVNIVAGVTKDLINKGYHAGKLVKEVATRCGGGGGGRPDMAQAGGKQPEKLQDALSFVYEYVKSIS</sequence>
<evidence type="ECO:0000255" key="1">
    <source>
        <dbReference type="HAMAP-Rule" id="MF_00036"/>
    </source>
</evidence>